<gene>
    <name evidence="7" type="primary">OTU7</name>
    <name evidence="9" type="ordered locus">At5g67170</name>
    <name evidence="10" type="ORF">K21H1.13</name>
</gene>
<sequence>MAKTKQQKSKPKKQPHQKQGKDCDLSQFRAQLDALGLKIIQVTADGNCFFRAIADQLEGNEDEHNKYRNMIVLYIVKNREMFEPFIEDDVPFEDYCKTMDDDGTWAGNMELQAASLVTRSNICIHRNMSPRWYIRNFEDTRTRMIHLSYHDGEHYNSVRSKEDACGGPARPVVIEADAKVSAASKQAKATESKSKNKADKCHVNAGAIKVVMSGSCCDNTEKAEQVLLQVNGDVDAAIEFLIADQGMESLTENDTETASASDTINPKHASDSPMENTEQAREELIEEESASGNNSETVQAKCTTQTDDKKIPRNKTCPCGSKKKYKSCCGTATGRSSVKLLVSQTMESKKGRKNLRRGTSNEVEANAPDVGALCI</sequence>
<reference key="1">
    <citation type="journal article" date="2014" name="Front. Plant Sci.">
        <title>Distinct phylogenetic relationships and biochemical properties of Arabidopsis ovarian tumor-related deubiquitinases support their functional differentiation.</title>
        <authorList>
            <person name="Radjacommare R."/>
            <person name="Usharani R."/>
            <person name="Kuo C.-H."/>
            <person name="Fu H."/>
        </authorList>
    </citation>
    <scope>NUCLEOTIDE SEQUENCE [MRNA] (ISOFORMS 1 AND 2)</scope>
    <scope>FUNCTION</scope>
    <scope>MUTAGENESIS OF CYS-48</scope>
    <scope>BIOPHYSICOCHEMICAL PROPERTIES</scope>
    <scope>CATALYTIC ACTIVITY</scope>
    <scope>GENE FAMILY</scope>
    <scope>NOMENCLATURE</scope>
</reference>
<reference key="2">
    <citation type="journal article" date="2000" name="DNA Res.">
        <title>Structural analysis of Arabidopsis thaliana chromosome 5. X. Sequence features of the regions of 3,076,755 bp covered by sixty P1 and TAC clones.</title>
        <authorList>
            <person name="Sato S."/>
            <person name="Nakamura Y."/>
            <person name="Kaneko T."/>
            <person name="Katoh T."/>
            <person name="Asamizu E."/>
            <person name="Kotani H."/>
            <person name="Tabata S."/>
        </authorList>
    </citation>
    <scope>NUCLEOTIDE SEQUENCE [LARGE SCALE GENOMIC DNA]</scope>
    <source>
        <strain>cv. Columbia</strain>
    </source>
</reference>
<reference key="3">
    <citation type="journal article" date="2017" name="Plant J.">
        <title>Araport11: a complete reannotation of the Arabidopsis thaliana reference genome.</title>
        <authorList>
            <person name="Cheng C.Y."/>
            <person name="Krishnakumar V."/>
            <person name="Chan A.P."/>
            <person name="Thibaud-Nissen F."/>
            <person name="Schobel S."/>
            <person name="Town C.D."/>
        </authorList>
    </citation>
    <scope>GENOME REANNOTATION</scope>
    <source>
        <strain>cv. Columbia</strain>
    </source>
</reference>
<reference key="4">
    <citation type="journal article" date="2003" name="Science">
        <title>Empirical analysis of transcriptional activity in the Arabidopsis genome.</title>
        <authorList>
            <person name="Yamada K."/>
            <person name="Lim J."/>
            <person name="Dale J.M."/>
            <person name="Chen H."/>
            <person name="Shinn P."/>
            <person name="Palm C.J."/>
            <person name="Southwick A.M."/>
            <person name="Wu H.C."/>
            <person name="Kim C.J."/>
            <person name="Nguyen M."/>
            <person name="Pham P.K."/>
            <person name="Cheuk R.F."/>
            <person name="Karlin-Newmann G."/>
            <person name="Liu S.X."/>
            <person name="Lam B."/>
            <person name="Sakano H."/>
            <person name="Wu T."/>
            <person name="Yu G."/>
            <person name="Miranda M."/>
            <person name="Quach H.L."/>
            <person name="Tripp M."/>
            <person name="Chang C.H."/>
            <person name="Lee J.M."/>
            <person name="Toriumi M.J."/>
            <person name="Chan M.M."/>
            <person name="Tang C.C."/>
            <person name="Onodera C.S."/>
            <person name="Deng J.M."/>
            <person name="Akiyama K."/>
            <person name="Ansari Y."/>
            <person name="Arakawa T."/>
            <person name="Banh J."/>
            <person name="Banno F."/>
            <person name="Bowser L."/>
            <person name="Brooks S.Y."/>
            <person name="Carninci P."/>
            <person name="Chao Q."/>
            <person name="Choy N."/>
            <person name="Enju A."/>
            <person name="Goldsmith A.D."/>
            <person name="Gurjal M."/>
            <person name="Hansen N.F."/>
            <person name="Hayashizaki Y."/>
            <person name="Johnson-Hopson C."/>
            <person name="Hsuan V.W."/>
            <person name="Iida K."/>
            <person name="Karnes M."/>
            <person name="Khan S."/>
            <person name="Koesema E."/>
            <person name="Ishida J."/>
            <person name="Jiang P.X."/>
            <person name="Jones T."/>
            <person name="Kawai J."/>
            <person name="Kamiya A."/>
            <person name="Meyers C."/>
            <person name="Nakajima M."/>
            <person name="Narusaka M."/>
            <person name="Seki M."/>
            <person name="Sakurai T."/>
            <person name="Satou M."/>
            <person name="Tamse R."/>
            <person name="Vaysberg M."/>
            <person name="Wallender E.K."/>
            <person name="Wong C."/>
            <person name="Yamamura Y."/>
            <person name="Yuan S."/>
            <person name="Shinozaki K."/>
            <person name="Davis R.W."/>
            <person name="Theologis A."/>
            <person name="Ecker J.R."/>
        </authorList>
    </citation>
    <scope>NUCLEOTIDE SEQUENCE [LARGE SCALE MRNA] (ISOFORM 1)</scope>
    <source>
        <strain>cv. Columbia</strain>
    </source>
</reference>
<proteinExistence type="evidence at protein level"/>
<name>OTU7_ARATH</name>
<protein>
    <recommendedName>
        <fullName evidence="7">OVARIAN TUMOR DOMAIN-containing deubiquitinating enzyme 7</fullName>
        <shortName evidence="7">OTU domain-containing protein 7</shortName>
        <ecNumber evidence="6">3.4.19.12</ecNumber>
    </recommendedName>
    <alternativeName>
        <fullName evidence="7">Deubiquitinating enzyme OTU7</fullName>
    </alternativeName>
</protein>
<comment type="function">
    <text evidence="6">Hydrolase that can remove conjugated ubiquitin from proteins in vitro and may therefore play an important regulatory role at the level of protein turnover by preventing degradation (PubMed:24659992). Cysteine protease with a preference for 'Lys-63' over 'Lys-48' over 'Met-1' -linked ubiquitin (UB) tetramers as substrates (PubMed:24659992). Also cleaves RUB-GST fusion (PubMed:24659992).</text>
</comment>
<comment type="catalytic activity">
    <reaction evidence="6">
        <text>Thiol-dependent hydrolysis of ester, thioester, amide, peptide and isopeptide bonds formed by the C-terminal Gly of ubiquitin (a 76-residue protein attached to proteins as an intracellular targeting signal).</text>
        <dbReference type="EC" id="3.4.19.12"/>
    </reaction>
</comment>
<comment type="biophysicochemical properties">
    <phDependence>
        <text evidence="6">Optimum pH is 7.</text>
    </phDependence>
</comment>
<comment type="subcellular location">
    <subcellularLocation>
        <location evidence="4">Nucleus</location>
    </subcellularLocation>
</comment>
<comment type="alternative products">
    <event type="alternative splicing"/>
    <isoform>
        <id>F4K3M6-1</id>
        <name>1</name>
        <sequence type="displayed"/>
    </isoform>
    <isoform>
        <id>F4K3M6-2</id>
        <name>2</name>
        <sequence type="described" ref="VSP_060262 VSP_060263 VSP_060264"/>
    </isoform>
</comment>
<comment type="similarity">
    <text evidence="8">Belongs to the peptidase C85 family.</text>
</comment>
<comment type="sequence caution" evidence="8">
    <conflict type="erroneous gene model prediction">
        <sequence resource="EMBL-CDS" id="BAB10951"/>
    </conflict>
</comment>
<keyword id="KW-0025">Alternative splicing</keyword>
<keyword id="KW-0378">Hydrolase</keyword>
<keyword id="KW-0539">Nucleus</keyword>
<keyword id="KW-0645">Protease</keyword>
<keyword id="KW-1185">Reference proteome</keyword>
<keyword id="KW-0833">Ubl conjugation pathway</keyword>
<feature type="chain" id="PRO_0000447757" description="OVARIAN TUMOR DOMAIN-containing deubiquitinating enzyme 7">
    <location>
        <begin position="1"/>
        <end position="375"/>
    </location>
</feature>
<feature type="domain" description="OTU" evidence="3">
    <location>
        <begin position="37"/>
        <end position="161"/>
    </location>
</feature>
<feature type="domain" description="UBA-like" evidence="1">
    <location>
        <begin position="202"/>
        <end position="250"/>
    </location>
</feature>
<feature type="region of interest" description="Disordered" evidence="5">
    <location>
        <begin position="1"/>
        <end position="23"/>
    </location>
</feature>
<feature type="region of interest" description="Disordered" evidence="5">
    <location>
        <begin position="251"/>
        <end position="306"/>
    </location>
</feature>
<feature type="short sequence motif" description="Nuclear localization signal" evidence="4">
    <location>
        <begin position="308"/>
        <end position="315"/>
    </location>
</feature>
<feature type="compositionally biased region" description="Basic residues" evidence="5">
    <location>
        <begin position="1"/>
        <end position="18"/>
    </location>
</feature>
<feature type="compositionally biased region" description="Polar residues" evidence="5">
    <location>
        <begin position="251"/>
        <end position="264"/>
    </location>
</feature>
<feature type="compositionally biased region" description="Polar residues" evidence="5">
    <location>
        <begin position="290"/>
        <end position="305"/>
    </location>
</feature>
<feature type="active site" evidence="8">
    <location>
        <position position="45"/>
    </location>
</feature>
<feature type="active site" description="Nucleophile" evidence="6">
    <location>
        <position position="48"/>
    </location>
</feature>
<feature type="active site" evidence="2">
    <location>
        <position position="154"/>
    </location>
</feature>
<feature type="splice variant" id="VSP_060262" description="In isoform 2.">
    <location>
        <position position="18"/>
    </location>
</feature>
<feature type="splice variant" id="VSP_060263" description="In isoform 2.">
    <original>ADAKVSAASKQAKATESKSKNKADKCHVNAGAIKVVMSGSCCDNTEKAEQVLLQVNG</original>
    <variation>VLLQTLALCLSVIYINCLFFCPNKFQLCGRLMLKFQQHLNKRKLQRASPKIKLISVM</variation>
    <location>
        <begin position="176"/>
        <end position="232"/>
    </location>
</feature>
<feature type="splice variant" id="VSP_060264" description="In isoform 2.">
    <location>
        <begin position="233"/>
        <end position="375"/>
    </location>
</feature>
<feature type="mutagenesis site" description="Abolished cleavage activities for 'Lys-48'- and 'Lys-63'-linked ubiquitin (UB) tetramers." evidence="6">
    <original>C</original>
    <variation>S</variation>
    <location>
        <position position="48"/>
    </location>
</feature>
<feature type="sequence conflict" description="In Ref. 4; AAN17412/AAN72203." evidence="8" ref="4">
    <original>K</original>
    <variation>R</variation>
    <location>
        <position position="10"/>
    </location>
</feature>
<organism>
    <name type="scientific">Arabidopsis thaliana</name>
    <name type="common">Mouse-ear cress</name>
    <dbReference type="NCBI Taxonomy" id="3702"/>
    <lineage>
        <taxon>Eukaryota</taxon>
        <taxon>Viridiplantae</taxon>
        <taxon>Streptophyta</taxon>
        <taxon>Embryophyta</taxon>
        <taxon>Tracheophyta</taxon>
        <taxon>Spermatophyta</taxon>
        <taxon>Magnoliopsida</taxon>
        <taxon>eudicotyledons</taxon>
        <taxon>Gunneridae</taxon>
        <taxon>Pentapetalae</taxon>
        <taxon>rosids</taxon>
        <taxon>malvids</taxon>
        <taxon>Brassicales</taxon>
        <taxon>Brassicaceae</taxon>
        <taxon>Camelineae</taxon>
        <taxon>Arabidopsis</taxon>
    </lineage>
</organism>
<dbReference type="EC" id="3.4.19.12" evidence="6"/>
<dbReference type="EMBL" id="JQ013452">
    <property type="protein sequence ID" value="AFS88955.1"/>
    <property type="molecule type" value="mRNA"/>
</dbReference>
<dbReference type="EMBL" id="JQ013453">
    <property type="protein sequence ID" value="AFS88956.1"/>
    <property type="molecule type" value="mRNA"/>
</dbReference>
<dbReference type="EMBL" id="AB020742">
    <property type="protein sequence ID" value="BAB10951.1"/>
    <property type="status" value="ALT_SEQ"/>
    <property type="molecule type" value="Genomic_DNA"/>
</dbReference>
<dbReference type="EMBL" id="CP002688">
    <property type="protein sequence ID" value="AED98309.1"/>
    <property type="molecule type" value="Genomic_DNA"/>
</dbReference>
<dbReference type="EMBL" id="CP002688">
    <property type="protein sequence ID" value="AED98310.2"/>
    <property type="molecule type" value="Genomic_DNA"/>
</dbReference>
<dbReference type="EMBL" id="BT000435">
    <property type="protein sequence ID" value="AAN17412.1"/>
    <property type="molecule type" value="mRNA"/>
</dbReference>
<dbReference type="EMBL" id="BT002192">
    <property type="protein sequence ID" value="AAN72203.1"/>
    <property type="molecule type" value="mRNA"/>
</dbReference>
<dbReference type="RefSeq" id="NP_001318894.1">
    <molecule id="F4K3M6-1"/>
    <property type="nucleotide sequence ID" value="NM_001345812.1"/>
</dbReference>
<dbReference type="RefSeq" id="NP_201518.2">
    <molecule id="F4K3M6-1"/>
    <property type="nucleotide sequence ID" value="NM_126117.3"/>
</dbReference>
<dbReference type="SMR" id="F4K3M6"/>
<dbReference type="FunCoup" id="F4K3M6">
    <property type="interactions" value="1970"/>
</dbReference>
<dbReference type="STRING" id="3702.F4K3M6"/>
<dbReference type="MEROPS" id="C85.003"/>
<dbReference type="iPTMnet" id="F4K3M6"/>
<dbReference type="PaxDb" id="3702-AT5G67170.1"/>
<dbReference type="ProteomicsDB" id="189182">
    <molecule id="F4K3M6-1"/>
</dbReference>
<dbReference type="EnsemblPlants" id="AT5G67170.1">
    <molecule id="F4K3M6-1"/>
    <property type="protein sequence ID" value="AT5G67170.1"/>
    <property type="gene ID" value="AT5G67170"/>
</dbReference>
<dbReference type="EnsemblPlants" id="AT5G67170.2">
    <molecule id="F4K3M6-1"/>
    <property type="protein sequence ID" value="AT5G67170.2"/>
    <property type="gene ID" value="AT5G67170"/>
</dbReference>
<dbReference type="GeneID" id="836852"/>
<dbReference type="Gramene" id="AT5G67170.1">
    <molecule id="F4K3M6-1"/>
    <property type="protein sequence ID" value="AT5G67170.1"/>
    <property type="gene ID" value="AT5G67170"/>
</dbReference>
<dbReference type="Gramene" id="AT5G67170.2">
    <molecule id="F4K3M6-1"/>
    <property type="protein sequence ID" value="AT5G67170.2"/>
    <property type="gene ID" value="AT5G67170"/>
</dbReference>
<dbReference type="KEGG" id="ath:AT5G67170"/>
<dbReference type="Araport" id="AT5G67170"/>
<dbReference type="TAIR" id="AT5G67170"/>
<dbReference type="eggNOG" id="KOG2605">
    <property type="taxonomic scope" value="Eukaryota"/>
</dbReference>
<dbReference type="InParanoid" id="F4K3M6"/>
<dbReference type="OMA" id="KPSCNLA"/>
<dbReference type="OrthoDB" id="415023at2759"/>
<dbReference type="PhylomeDB" id="F4K3M6"/>
<dbReference type="PRO" id="PR:F4K3M6"/>
<dbReference type="Proteomes" id="UP000006548">
    <property type="component" value="Chromosome 5"/>
</dbReference>
<dbReference type="ExpressionAtlas" id="F4K3M6">
    <property type="expression patterns" value="baseline and differential"/>
</dbReference>
<dbReference type="GO" id="GO:0005634">
    <property type="term" value="C:nucleus"/>
    <property type="evidence" value="ECO:0007669"/>
    <property type="project" value="UniProtKB-SubCell"/>
</dbReference>
<dbReference type="GO" id="GO:0004843">
    <property type="term" value="F:cysteine-type deubiquitinase activity"/>
    <property type="evidence" value="ECO:0007669"/>
    <property type="project" value="UniProtKB-EC"/>
</dbReference>
<dbReference type="GO" id="GO:0006508">
    <property type="term" value="P:proteolysis"/>
    <property type="evidence" value="ECO:0007669"/>
    <property type="project" value="UniProtKB-KW"/>
</dbReference>
<dbReference type="CDD" id="cd22771">
    <property type="entry name" value="OTU_plant_OTU7-like"/>
    <property type="match status" value="1"/>
</dbReference>
<dbReference type="FunFam" id="3.90.70.80:FF:000009">
    <property type="entry name" value="OTU domain-containing protein 3"/>
    <property type="match status" value="1"/>
</dbReference>
<dbReference type="Gene3D" id="3.10.450.50">
    <property type="match status" value="1"/>
</dbReference>
<dbReference type="Gene3D" id="3.90.70.80">
    <property type="match status" value="1"/>
</dbReference>
<dbReference type="InterPro" id="IPR003323">
    <property type="entry name" value="OTU_dom"/>
</dbReference>
<dbReference type="InterPro" id="IPR038765">
    <property type="entry name" value="Papain-like_cys_pep_sf"/>
</dbReference>
<dbReference type="InterPro" id="IPR050704">
    <property type="entry name" value="Peptidase_C85-like"/>
</dbReference>
<dbReference type="InterPro" id="IPR004027">
    <property type="entry name" value="SEC_C_motif"/>
</dbReference>
<dbReference type="PANTHER" id="PTHR12419">
    <property type="entry name" value="OTU DOMAIN CONTAINING PROTEIN"/>
    <property type="match status" value="1"/>
</dbReference>
<dbReference type="PANTHER" id="PTHR12419:SF7">
    <property type="entry name" value="OTU DOMAIN-CONTAINING PROTEIN 3"/>
    <property type="match status" value="1"/>
</dbReference>
<dbReference type="Pfam" id="PF02338">
    <property type="entry name" value="OTU"/>
    <property type="match status" value="1"/>
</dbReference>
<dbReference type="Pfam" id="PF02810">
    <property type="entry name" value="SEC-C"/>
    <property type="match status" value="1"/>
</dbReference>
<dbReference type="SUPFAM" id="SSF54001">
    <property type="entry name" value="Cysteine proteinases"/>
    <property type="match status" value="1"/>
</dbReference>
<dbReference type="SUPFAM" id="SSF103642">
    <property type="entry name" value="Sec-C motif"/>
    <property type="match status" value="1"/>
</dbReference>
<dbReference type="PROSITE" id="PS50802">
    <property type="entry name" value="OTU"/>
    <property type="match status" value="1"/>
</dbReference>
<accession>F4K3M6</accession>
<accession>F4K3M5</accession>
<accession>K9M8Y4</accession>
<accession>Q8GSJ9</accession>
<accession>Q9FH96</accession>
<evidence type="ECO:0000250" key="1">
    <source>
        <dbReference type="UniProtKB" id="Q5T2D3"/>
    </source>
</evidence>
<evidence type="ECO:0000250" key="2">
    <source>
        <dbReference type="UniProtKB" id="Q96G74"/>
    </source>
</evidence>
<evidence type="ECO:0000255" key="3">
    <source>
        <dbReference type="PROSITE-ProRule" id="PRU00139"/>
    </source>
</evidence>
<evidence type="ECO:0000255" key="4">
    <source>
        <dbReference type="PROSITE-ProRule" id="PRU00768"/>
    </source>
</evidence>
<evidence type="ECO:0000256" key="5">
    <source>
        <dbReference type="SAM" id="MobiDB-lite"/>
    </source>
</evidence>
<evidence type="ECO:0000269" key="6">
    <source>
    </source>
</evidence>
<evidence type="ECO:0000303" key="7">
    <source>
    </source>
</evidence>
<evidence type="ECO:0000305" key="8"/>
<evidence type="ECO:0000312" key="9">
    <source>
        <dbReference type="Araport" id="AT5G67170"/>
    </source>
</evidence>
<evidence type="ECO:0000312" key="10">
    <source>
        <dbReference type="EMBL" id="BAB10951.1"/>
    </source>
</evidence>